<gene>
    <name type="ordered locus">HEAR2518</name>
</gene>
<comment type="function">
    <text evidence="1">ATP-dependent carboxylate-amine ligase which exhibits weak glutamate--cysteine ligase activity.</text>
</comment>
<comment type="catalytic activity">
    <reaction evidence="1">
        <text>L-cysteine + L-glutamate + ATP = gamma-L-glutamyl-L-cysteine + ADP + phosphate + H(+)</text>
        <dbReference type="Rhea" id="RHEA:13285"/>
        <dbReference type="ChEBI" id="CHEBI:15378"/>
        <dbReference type="ChEBI" id="CHEBI:29985"/>
        <dbReference type="ChEBI" id="CHEBI:30616"/>
        <dbReference type="ChEBI" id="CHEBI:35235"/>
        <dbReference type="ChEBI" id="CHEBI:43474"/>
        <dbReference type="ChEBI" id="CHEBI:58173"/>
        <dbReference type="ChEBI" id="CHEBI:456216"/>
        <dbReference type="EC" id="6.3.2.2"/>
    </reaction>
</comment>
<comment type="similarity">
    <text evidence="1">Belongs to the glutamate--cysteine ligase type 2 family. YbdK subfamily.</text>
</comment>
<accession>A4G807</accession>
<protein>
    <recommendedName>
        <fullName evidence="1">Putative glutamate--cysteine ligase 2</fullName>
        <ecNumber evidence="1">6.3.2.2</ecNumber>
    </recommendedName>
    <alternativeName>
        <fullName evidence="1">Gamma-glutamylcysteine synthetase 2</fullName>
        <shortName evidence="1">GCS 2</shortName>
        <shortName evidence="1">Gamma-GCS 2</shortName>
    </alternativeName>
</protein>
<sequence>MLEFNNSTPLTMGVELELQIVNRRDYNLTRGSDDLLQIINKTEHGYDIKPEITESMIEIATAVHTDHVEMLAELTAMRTLLVTAANKLNLGLAGGGAHPFQHWEDQRIYPTDRYRLVSELYGYLAKQFTVYGQHIHIGCASGDDAIRLTHLLARQIPHFIALSASSPFYQGVDTSFQSSRLTSINAFPLSGTMPFVSDWEAFNTYFIKMSHLGIVASMKDFYWDIRPKPEYGTVEIRVCDTPLAIETAVALGAYAQTLSKYYFAHTELEPTQDTYLTYSYNRFQACRFGLNGALINPITGTQSSIKDDILQTFELLKDVAEELGTTDAIELLRQRVLSGQSDADWLRASYEKSGSLSDAVRQQSAVWMAT</sequence>
<proteinExistence type="inferred from homology"/>
<organism>
    <name type="scientific">Herminiimonas arsenicoxydans</name>
    <dbReference type="NCBI Taxonomy" id="204773"/>
    <lineage>
        <taxon>Bacteria</taxon>
        <taxon>Pseudomonadati</taxon>
        <taxon>Pseudomonadota</taxon>
        <taxon>Betaproteobacteria</taxon>
        <taxon>Burkholderiales</taxon>
        <taxon>Oxalobacteraceae</taxon>
        <taxon>Herminiimonas</taxon>
    </lineage>
</organism>
<dbReference type="EC" id="6.3.2.2" evidence="1"/>
<dbReference type="EMBL" id="CU207211">
    <property type="protein sequence ID" value="CAL62644.1"/>
    <property type="molecule type" value="Genomic_DNA"/>
</dbReference>
<dbReference type="SMR" id="A4G807"/>
<dbReference type="STRING" id="204773.HEAR2518"/>
<dbReference type="KEGG" id="har:HEAR2518"/>
<dbReference type="eggNOG" id="COG2170">
    <property type="taxonomic scope" value="Bacteria"/>
</dbReference>
<dbReference type="HOGENOM" id="CLU_044848_1_1_4"/>
<dbReference type="OrthoDB" id="9769628at2"/>
<dbReference type="Proteomes" id="UP000006697">
    <property type="component" value="Chromosome"/>
</dbReference>
<dbReference type="GO" id="GO:0005524">
    <property type="term" value="F:ATP binding"/>
    <property type="evidence" value="ECO:0007669"/>
    <property type="project" value="UniProtKB-KW"/>
</dbReference>
<dbReference type="GO" id="GO:0004357">
    <property type="term" value="F:glutamate-cysteine ligase activity"/>
    <property type="evidence" value="ECO:0007669"/>
    <property type="project" value="UniProtKB-EC"/>
</dbReference>
<dbReference type="GO" id="GO:0042398">
    <property type="term" value="P:modified amino acid biosynthetic process"/>
    <property type="evidence" value="ECO:0007669"/>
    <property type="project" value="InterPro"/>
</dbReference>
<dbReference type="Gene3D" id="3.30.590.20">
    <property type="match status" value="1"/>
</dbReference>
<dbReference type="HAMAP" id="MF_01609">
    <property type="entry name" value="Glu_cys_ligase_2"/>
    <property type="match status" value="1"/>
</dbReference>
<dbReference type="InterPro" id="IPR050141">
    <property type="entry name" value="GCL_type2/YbdK_subfam"/>
</dbReference>
<dbReference type="InterPro" id="IPR006336">
    <property type="entry name" value="GCS2"/>
</dbReference>
<dbReference type="InterPro" id="IPR014746">
    <property type="entry name" value="Gln_synth/guanido_kin_cat_dom"/>
</dbReference>
<dbReference type="InterPro" id="IPR011793">
    <property type="entry name" value="YbdK"/>
</dbReference>
<dbReference type="NCBIfam" id="TIGR02050">
    <property type="entry name" value="gshA_cyan_rel"/>
    <property type="match status" value="1"/>
</dbReference>
<dbReference type="NCBIfam" id="NF010040">
    <property type="entry name" value="PRK13516.1"/>
    <property type="match status" value="1"/>
</dbReference>
<dbReference type="PANTHER" id="PTHR36510">
    <property type="entry name" value="GLUTAMATE--CYSTEINE LIGASE 2-RELATED"/>
    <property type="match status" value="1"/>
</dbReference>
<dbReference type="PANTHER" id="PTHR36510:SF1">
    <property type="entry name" value="GLUTAMATE--CYSTEINE LIGASE 2-RELATED"/>
    <property type="match status" value="1"/>
</dbReference>
<dbReference type="Pfam" id="PF04107">
    <property type="entry name" value="GCS2"/>
    <property type="match status" value="1"/>
</dbReference>
<dbReference type="SUPFAM" id="SSF55931">
    <property type="entry name" value="Glutamine synthetase/guanido kinase"/>
    <property type="match status" value="1"/>
</dbReference>
<evidence type="ECO:0000255" key="1">
    <source>
        <dbReference type="HAMAP-Rule" id="MF_01609"/>
    </source>
</evidence>
<feature type="chain" id="PRO_1000069438" description="Putative glutamate--cysteine ligase 2">
    <location>
        <begin position="1"/>
        <end position="370"/>
    </location>
</feature>
<name>GCS2_HERAR</name>
<reference key="1">
    <citation type="journal article" date="2007" name="PLoS Genet.">
        <title>A tale of two oxidation states: bacterial colonization of arsenic-rich environments.</title>
        <authorList>
            <person name="Muller D."/>
            <person name="Medigue C."/>
            <person name="Koechler S."/>
            <person name="Barbe V."/>
            <person name="Barakat M."/>
            <person name="Talla E."/>
            <person name="Bonnefoy V."/>
            <person name="Krin E."/>
            <person name="Arsene-Ploetze F."/>
            <person name="Carapito C."/>
            <person name="Chandler M."/>
            <person name="Cournoyer B."/>
            <person name="Cruveiller S."/>
            <person name="Dossat C."/>
            <person name="Duval S."/>
            <person name="Heymann M."/>
            <person name="Leize E."/>
            <person name="Lieutaud A."/>
            <person name="Lievremont D."/>
            <person name="Makita Y."/>
            <person name="Mangenot S."/>
            <person name="Nitschke W."/>
            <person name="Ortet P."/>
            <person name="Perdrial N."/>
            <person name="Schoepp B."/>
            <person name="Siguier P."/>
            <person name="Simeonova D.D."/>
            <person name="Rouy Z."/>
            <person name="Segurens B."/>
            <person name="Turlin E."/>
            <person name="Vallenet D."/>
            <person name="van Dorsselaer A."/>
            <person name="Weiss S."/>
            <person name="Weissenbach J."/>
            <person name="Lett M.-C."/>
            <person name="Danchin A."/>
            <person name="Bertin P.N."/>
        </authorList>
    </citation>
    <scope>NUCLEOTIDE SEQUENCE [LARGE SCALE GENOMIC DNA]</scope>
    <source>
        <strain>ULPAs1</strain>
    </source>
</reference>
<keyword id="KW-0067">ATP-binding</keyword>
<keyword id="KW-0436">Ligase</keyword>
<keyword id="KW-0547">Nucleotide-binding</keyword>
<keyword id="KW-1185">Reference proteome</keyword>